<gene>
    <name type="primary">cyyr1</name>
</gene>
<protein>
    <recommendedName>
        <fullName>Cysteine and tyrosine-rich protein 1</fullName>
    </recommendedName>
</protein>
<proteinExistence type="evidence at transcript level"/>
<reference key="1">
    <citation type="submission" date="2005-01" db="EMBL/GenBank/DDBJ databases">
        <authorList>
            <consortium name="NIH - Xenopus Gene Collection (XGC) project"/>
        </authorList>
    </citation>
    <scope>NUCLEOTIDE SEQUENCE [LARGE SCALE MRNA]</scope>
    <source>
        <tissue>Egg</tissue>
    </source>
</reference>
<accession>Q5HZN7</accession>
<feature type="signal peptide" evidence="1">
    <location>
        <begin position="1"/>
        <end position="27"/>
    </location>
</feature>
<feature type="chain" id="PRO_0000341302" description="Cysteine and tyrosine-rich protein 1">
    <location>
        <begin position="28"/>
        <end position="152"/>
    </location>
</feature>
<feature type="topological domain" description="Extracellular" evidence="1">
    <location>
        <begin position="28"/>
        <end position="59"/>
    </location>
</feature>
<feature type="transmembrane region" description="Helical" evidence="1">
    <location>
        <begin position="60"/>
        <end position="80"/>
    </location>
</feature>
<feature type="topological domain" description="Cytoplasmic" evidence="1">
    <location>
        <begin position="81"/>
        <end position="152"/>
    </location>
</feature>
<feature type="region of interest" description="Disordered" evidence="2">
    <location>
        <begin position="130"/>
        <end position="152"/>
    </location>
</feature>
<comment type="subcellular location">
    <subcellularLocation>
        <location evidence="3">Membrane</location>
        <topology evidence="3">Single-pass type I membrane protein</topology>
    </subcellularLocation>
</comment>
<comment type="similarity">
    <text evidence="3">Belongs to the CYYR1 family.</text>
</comment>
<evidence type="ECO:0000255" key="1"/>
<evidence type="ECO:0000256" key="2">
    <source>
        <dbReference type="SAM" id="MobiDB-lite"/>
    </source>
</evidence>
<evidence type="ECO:0000305" key="3"/>
<name>CYYR1_XENLA</name>
<organism>
    <name type="scientific">Xenopus laevis</name>
    <name type="common">African clawed frog</name>
    <dbReference type="NCBI Taxonomy" id="8355"/>
    <lineage>
        <taxon>Eukaryota</taxon>
        <taxon>Metazoa</taxon>
        <taxon>Chordata</taxon>
        <taxon>Craniata</taxon>
        <taxon>Vertebrata</taxon>
        <taxon>Euteleostomi</taxon>
        <taxon>Amphibia</taxon>
        <taxon>Batrachia</taxon>
        <taxon>Anura</taxon>
        <taxon>Pipoidea</taxon>
        <taxon>Pipidae</taxon>
        <taxon>Xenopodinae</taxon>
        <taxon>Xenopus</taxon>
        <taxon>Xenopus</taxon>
    </lineage>
</organism>
<dbReference type="EMBL" id="BC088945">
    <property type="protein sequence ID" value="AAH88945.1"/>
    <property type="molecule type" value="mRNA"/>
</dbReference>
<dbReference type="RefSeq" id="NP_001088967.1">
    <property type="nucleotide sequence ID" value="NM_001095498.1"/>
</dbReference>
<dbReference type="DNASU" id="496347"/>
<dbReference type="GeneID" id="496347"/>
<dbReference type="KEGG" id="xla:496347"/>
<dbReference type="AGR" id="Xenbase:XB-GENE-866575"/>
<dbReference type="CTD" id="496347"/>
<dbReference type="Xenbase" id="XB-GENE-866575">
    <property type="gene designation" value="cyyr1.L"/>
</dbReference>
<dbReference type="OrthoDB" id="8920103at2759"/>
<dbReference type="Proteomes" id="UP000186698">
    <property type="component" value="Chromosome 2L"/>
</dbReference>
<dbReference type="Bgee" id="496347">
    <property type="expression patterns" value="Expressed in egg cell and 19 other cell types or tissues"/>
</dbReference>
<dbReference type="GO" id="GO:0016020">
    <property type="term" value="C:membrane"/>
    <property type="evidence" value="ECO:0007669"/>
    <property type="project" value="UniProtKB-SubCell"/>
</dbReference>
<dbReference type="InterPro" id="IPR022640">
    <property type="entry name" value="CYYR1"/>
</dbReference>
<dbReference type="PANTHER" id="PTHR38490">
    <property type="entry name" value="CYSTEINE AND TYROSINE-RICH PROTEIN 1"/>
    <property type="match status" value="1"/>
</dbReference>
<dbReference type="PANTHER" id="PTHR38490:SF1">
    <property type="entry name" value="CYSTEINE AND TYROSINE-RICH PROTEIN 1"/>
    <property type="match status" value="1"/>
</dbReference>
<dbReference type="Pfam" id="PF10873">
    <property type="entry name" value="CYYR1"/>
    <property type="match status" value="1"/>
</dbReference>
<keyword id="KW-0472">Membrane</keyword>
<keyword id="KW-1185">Reference proteome</keyword>
<keyword id="KW-0732">Signal</keyword>
<keyword id="KW-0812">Transmembrane</keyword>
<keyword id="KW-1133">Transmembrane helix</keyword>
<sequence>MDIPRSLRHPEILLVLLLSEITDICQAYCEADCKSYCCDGTPPYCCSYYAYIGNVLSGTAIAGIVFGIVFIMGVIAGIAICICMCMKSSRGTRVGVIRTTHINAISSYPAAPPPYSYEYEMDFPLDLPPPYTPTPPMSHYPSPPPYPGPSRK</sequence>